<sequence length="12" mass="1232">GSLTGLISMPRT</sequence>
<evidence type="ECO:0000255" key="1"/>
<evidence type="ECO:0000269" key="2">
    <source>
    </source>
</evidence>
<evidence type="ECO:0000269" key="3">
    <source ref="2"/>
</evidence>
<evidence type="ECO:0000305" key="4"/>
<protein>
    <recommendedName>
        <fullName>Periviscerokinin-2</fullName>
        <shortName>DerVe-PVK-2</shortName>
    </recommendedName>
</protein>
<accession>P84660</accession>
<organism>
    <name type="scientific">Derocalymma versicolor</name>
    <name type="common">Cockroach</name>
    <dbReference type="NCBI Taxonomy" id="344692"/>
    <lineage>
        <taxon>Eukaryota</taxon>
        <taxon>Metazoa</taxon>
        <taxon>Ecdysozoa</taxon>
        <taxon>Arthropoda</taxon>
        <taxon>Hexapoda</taxon>
        <taxon>Insecta</taxon>
        <taxon>Pterygota</taxon>
        <taxon>Neoptera</taxon>
        <taxon>Polyneoptera</taxon>
        <taxon>Dictyoptera</taxon>
        <taxon>Blattodea</taxon>
        <taxon>Blaberoidea</taxon>
        <taxon>Blaberidae</taxon>
        <taxon>Perisphaerinae</taxon>
        <taxon>Derocalymma</taxon>
    </lineage>
</organism>
<keyword id="KW-0027">Amidation</keyword>
<keyword id="KW-0903">Direct protein sequencing</keyword>
<keyword id="KW-0527">Neuropeptide</keyword>
<keyword id="KW-0964">Secreted</keyword>
<name>PVK2_DERVE</name>
<proteinExistence type="evidence at protein level"/>
<comment type="function">
    <text evidence="4">Mediates visceral muscle contractile activity (myotropic activity).</text>
</comment>
<comment type="subcellular location">
    <subcellularLocation>
        <location evidence="4">Secreted</location>
    </subcellularLocation>
</comment>
<comment type="tissue specificity">
    <text evidence="3">Expressed in abdominal perisympathetic organs and abdominal ganglia.</text>
</comment>
<comment type="mass spectrometry" mass="1231.7" method="MALDI" evidence="3">
    <text>With amidation.</text>
</comment>
<comment type="similarity">
    <text evidence="1">Belongs to the periviscerokinin family.</text>
</comment>
<reference key="1">
    <citation type="journal article" date="2009" name="BMC Evol. Biol.">
        <title>A proteomic approach for studying insect phylogeny: CAPA peptides of ancient insect taxa (Dictyoptera, Blattoptera) as a test case.</title>
        <authorList>
            <person name="Roth S."/>
            <person name="Fromm B."/>
            <person name="Gaede G."/>
            <person name="Predel R."/>
        </authorList>
    </citation>
    <scope>PROTEIN SEQUENCE</scope>
    <scope>AMIDATION AT THR-12</scope>
    <source>
        <tissue>Abdominal perisympathetic organs</tissue>
    </source>
</reference>
<reference evidence="4" key="2">
    <citation type="submission" date="2005-09" db="UniProtKB">
        <authorList>
            <person name="Predel R."/>
        </authorList>
    </citation>
    <scope>PROTEIN SEQUENCE</scope>
    <scope>TISSUE SPECIFICITY</scope>
    <scope>MASS SPECTROMETRY</scope>
    <scope>AMIDATION AT THR-12</scope>
    <source>
        <tissue>Abdominal perisympathetic organs</tissue>
    </source>
</reference>
<feature type="peptide" id="PRO_0000044261" description="Periviscerokinin-2">
    <location>
        <begin position="1"/>
        <end position="12"/>
    </location>
</feature>
<feature type="modified residue" description="Threonine amide" evidence="2 3">
    <location>
        <position position="12"/>
    </location>
</feature>
<dbReference type="GO" id="GO:0005576">
    <property type="term" value="C:extracellular region"/>
    <property type="evidence" value="ECO:0007669"/>
    <property type="project" value="UniProtKB-SubCell"/>
</dbReference>
<dbReference type="GO" id="GO:0007218">
    <property type="term" value="P:neuropeptide signaling pathway"/>
    <property type="evidence" value="ECO:0007669"/>
    <property type="project" value="UniProtKB-KW"/>
</dbReference>
<dbReference type="InterPro" id="IPR013231">
    <property type="entry name" value="Periviscerokinin"/>
</dbReference>
<dbReference type="Pfam" id="PF08259">
    <property type="entry name" value="Periviscerokin"/>
    <property type="match status" value="1"/>
</dbReference>